<keyword id="KW-0067">ATP-binding</keyword>
<keyword id="KW-0104">Cadmium</keyword>
<keyword id="KW-1003">Cell membrane</keyword>
<keyword id="KW-0406">Ion transport</keyword>
<keyword id="KW-0408">Iron</keyword>
<keyword id="KW-0410">Iron transport</keyword>
<keyword id="KW-0472">Membrane</keyword>
<keyword id="KW-0479">Metal-binding</keyword>
<keyword id="KW-0547">Nucleotide-binding</keyword>
<keyword id="KW-0597">Phosphoprotein</keyword>
<keyword id="KW-1278">Translocase</keyword>
<keyword id="KW-0812">Transmembrane</keyword>
<keyword id="KW-1133">Transmembrane helix</keyword>
<keyword id="KW-0813">Transport</keyword>
<name>CADA_STAAR</name>
<proteinExistence type="inferred from homology"/>
<gene>
    <name type="primary">cadA</name>
    <name type="ordered locus">SAR0723</name>
</gene>
<reference key="1">
    <citation type="journal article" date="2004" name="Proc. Natl. Acad. Sci. U.S.A.">
        <title>Complete genomes of two clinical Staphylococcus aureus strains: evidence for the rapid evolution of virulence and drug resistance.</title>
        <authorList>
            <person name="Holden M.T.G."/>
            <person name="Feil E.J."/>
            <person name="Lindsay J.A."/>
            <person name="Peacock S.J."/>
            <person name="Day N.P.J."/>
            <person name="Enright M.C."/>
            <person name="Foster T.J."/>
            <person name="Moore C.E."/>
            <person name="Hurst L."/>
            <person name="Atkin R."/>
            <person name="Barron A."/>
            <person name="Bason N."/>
            <person name="Bentley S.D."/>
            <person name="Chillingworth C."/>
            <person name="Chillingworth T."/>
            <person name="Churcher C."/>
            <person name="Clark L."/>
            <person name="Corton C."/>
            <person name="Cronin A."/>
            <person name="Doggett J."/>
            <person name="Dowd L."/>
            <person name="Feltwell T."/>
            <person name="Hance Z."/>
            <person name="Harris B."/>
            <person name="Hauser H."/>
            <person name="Holroyd S."/>
            <person name="Jagels K."/>
            <person name="James K.D."/>
            <person name="Lennard N."/>
            <person name="Line A."/>
            <person name="Mayes R."/>
            <person name="Moule S."/>
            <person name="Mungall K."/>
            <person name="Ormond D."/>
            <person name="Quail M.A."/>
            <person name="Rabbinowitsch E."/>
            <person name="Rutherford K.M."/>
            <person name="Sanders M."/>
            <person name="Sharp S."/>
            <person name="Simmonds M."/>
            <person name="Stevens K."/>
            <person name="Whitehead S."/>
            <person name="Barrell B.G."/>
            <person name="Spratt B.G."/>
            <person name="Parkhill J."/>
        </authorList>
    </citation>
    <scope>NUCLEOTIDE SEQUENCE [LARGE SCALE GENOMIC DNA]</scope>
    <source>
        <strain>MRSA252</strain>
    </source>
</reference>
<sequence length="726" mass="78361">MDSSAKTLTEDKQVYRVEGFSCANCAGKFEKNVKQLAGVQDAKVNFGASKIDVYGNASVQELEKAGAFENLKVFPEKLANSSMQAVKEDTKAPKEEKIPFYKKHSTLLFATLLIAFGYLSHFVNGEDNLVTSMLFVGSIVIGGYSLFKVGFQNLIRFDFDMKTLMTVAVIGAAIIGEWAEASIVVVLFAISEALERFSMDRARQSIRSLMDIAPKEALVMRNGQEIMIHVDDIAVGDIMIVKPGEKIAMDGIIINGVSAVNQAAITGESVPVAKTVDDEVFAGTLNEEGLLEVKITKYVEDTTISKIIHLVEEAQGERAPAQAFVDKFAKYYTPIIMVIAALVAVVPPLFFGGSWDTWVYQGLAVLVVGCPCALVISTPISIVSAIGNAAKKGVLIKGGVYLEELGAIKAIAFDKTGTLTKGVPVVTDFKVLNDQVEEKELFSIITALEYRSQHPLASAIMKKAEQDNITYSDVRVEDFTSITGRGIQGNIDGTTYYIGSPRLFKELNVSDFSLEFENKVKVLQNQGKTAMIIGTDQTILGVIAVADEVRETSKNVIQKLHQLGIKQTIMLTGDNQGTAEAIGAHVGVSDIQSELMPQDKLDYIKKMKAEHGNVAMIGDGVNDAPALAASTVGIAMGGAGTDTAIETADIALMGDDLSKLPFAVRLSRKTLNIIKANITFAIGIKIIALLLVIPGWLTLWIAILSDMGATILVALNSLRLMRVKDK</sequence>
<dbReference type="EC" id="7.2.2.21" evidence="2"/>
<dbReference type="EMBL" id="BX571856">
    <property type="protein sequence ID" value="CAG39734.1"/>
    <property type="molecule type" value="Genomic_DNA"/>
</dbReference>
<dbReference type="RefSeq" id="WP_000378396.1">
    <property type="nucleotide sequence ID" value="NC_002952.2"/>
</dbReference>
<dbReference type="SMR" id="Q6GIX1"/>
<dbReference type="KEGG" id="sar:SAR0723"/>
<dbReference type="HOGENOM" id="CLU_001771_6_4_9"/>
<dbReference type="Proteomes" id="UP000000596">
    <property type="component" value="Chromosome"/>
</dbReference>
<dbReference type="GO" id="GO:0005886">
    <property type="term" value="C:plasma membrane"/>
    <property type="evidence" value="ECO:0007669"/>
    <property type="project" value="UniProtKB-SubCell"/>
</dbReference>
<dbReference type="GO" id="GO:0005524">
    <property type="term" value="F:ATP binding"/>
    <property type="evidence" value="ECO:0007669"/>
    <property type="project" value="UniProtKB-KW"/>
</dbReference>
<dbReference type="GO" id="GO:0016887">
    <property type="term" value="F:ATP hydrolysis activity"/>
    <property type="evidence" value="ECO:0007669"/>
    <property type="project" value="InterPro"/>
</dbReference>
<dbReference type="GO" id="GO:0046872">
    <property type="term" value="F:metal ion binding"/>
    <property type="evidence" value="ECO:0007669"/>
    <property type="project" value="UniProtKB-KW"/>
</dbReference>
<dbReference type="GO" id="GO:0008551">
    <property type="term" value="F:P-type cadmium transporter activity"/>
    <property type="evidence" value="ECO:0007669"/>
    <property type="project" value="UniProtKB-EC"/>
</dbReference>
<dbReference type="GO" id="GO:0006826">
    <property type="term" value="P:iron ion transport"/>
    <property type="evidence" value="ECO:0007669"/>
    <property type="project" value="UniProtKB-KW"/>
</dbReference>
<dbReference type="CDD" id="cd00371">
    <property type="entry name" value="HMA"/>
    <property type="match status" value="1"/>
</dbReference>
<dbReference type="CDD" id="cd07545">
    <property type="entry name" value="P-type_ATPase_Cd-like"/>
    <property type="match status" value="1"/>
</dbReference>
<dbReference type="FunFam" id="2.70.150.10:FF:000002">
    <property type="entry name" value="Copper-transporting ATPase 1, putative"/>
    <property type="match status" value="1"/>
</dbReference>
<dbReference type="Gene3D" id="3.30.70.100">
    <property type="match status" value="1"/>
</dbReference>
<dbReference type="Gene3D" id="3.40.1110.10">
    <property type="entry name" value="Calcium-transporting ATPase, cytoplasmic domain N"/>
    <property type="match status" value="1"/>
</dbReference>
<dbReference type="Gene3D" id="2.70.150.10">
    <property type="entry name" value="Calcium-transporting ATPase, cytoplasmic transduction domain A"/>
    <property type="match status" value="1"/>
</dbReference>
<dbReference type="Gene3D" id="3.40.50.1000">
    <property type="entry name" value="HAD superfamily/HAD-like"/>
    <property type="match status" value="1"/>
</dbReference>
<dbReference type="InterPro" id="IPR023299">
    <property type="entry name" value="ATPase_P-typ_cyto_dom_N"/>
</dbReference>
<dbReference type="InterPro" id="IPR018303">
    <property type="entry name" value="ATPase_P-typ_P_site"/>
</dbReference>
<dbReference type="InterPro" id="IPR023298">
    <property type="entry name" value="ATPase_P-typ_TM_dom_sf"/>
</dbReference>
<dbReference type="InterPro" id="IPR008250">
    <property type="entry name" value="ATPase_P-typ_transduc_dom_A_sf"/>
</dbReference>
<dbReference type="InterPro" id="IPR051014">
    <property type="entry name" value="Cation_Transport_ATPase_IB"/>
</dbReference>
<dbReference type="InterPro" id="IPR036412">
    <property type="entry name" value="HAD-like_sf"/>
</dbReference>
<dbReference type="InterPro" id="IPR023214">
    <property type="entry name" value="HAD_sf"/>
</dbReference>
<dbReference type="InterPro" id="IPR017969">
    <property type="entry name" value="Heavy-metal-associated_CS"/>
</dbReference>
<dbReference type="InterPro" id="IPR006121">
    <property type="entry name" value="HMA_dom"/>
</dbReference>
<dbReference type="InterPro" id="IPR036163">
    <property type="entry name" value="HMA_dom_sf"/>
</dbReference>
<dbReference type="InterPro" id="IPR027256">
    <property type="entry name" value="P-typ_ATPase_IB"/>
</dbReference>
<dbReference type="InterPro" id="IPR001757">
    <property type="entry name" value="P_typ_ATPase"/>
</dbReference>
<dbReference type="InterPro" id="IPR044492">
    <property type="entry name" value="P_typ_ATPase_HD_dom"/>
</dbReference>
<dbReference type="NCBIfam" id="TIGR01511">
    <property type="entry name" value="ATPase-IB1_Cu"/>
    <property type="match status" value="1"/>
</dbReference>
<dbReference type="NCBIfam" id="TIGR01512">
    <property type="entry name" value="ATPase-IB2_Cd"/>
    <property type="match status" value="1"/>
</dbReference>
<dbReference type="NCBIfam" id="TIGR01525">
    <property type="entry name" value="ATPase-IB_hvy"/>
    <property type="match status" value="1"/>
</dbReference>
<dbReference type="NCBIfam" id="TIGR01494">
    <property type="entry name" value="ATPase_P-type"/>
    <property type="match status" value="1"/>
</dbReference>
<dbReference type="PANTHER" id="PTHR48085">
    <property type="entry name" value="CADMIUM/ZINC-TRANSPORTING ATPASE HMA2-RELATED"/>
    <property type="match status" value="1"/>
</dbReference>
<dbReference type="PANTHER" id="PTHR48085:SF5">
    <property type="entry name" value="CADMIUM_ZINC-TRANSPORTING ATPASE HMA4-RELATED"/>
    <property type="match status" value="1"/>
</dbReference>
<dbReference type="Pfam" id="PF00122">
    <property type="entry name" value="E1-E2_ATPase"/>
    <property type="match status" value="1"/>
</dbReference>
<dbReference type="Pfam" id="PF00403">
    <property type="entry name" value="HMA"/>
    <property type="match status" value="1"/>
</dbReference>
<dbReference type="Pfam" id="PF00702">
    <property type="entry name" value="Hydrolase"/>
    <property type="match status" value="1"/>
</dbReference>
<dbReference type="PRINTS" id="PR00119">
    <property type="entry name" value="CATATPASE"/>
</dbReference>
<dbReference type="PRINTS" id="PR00941">
    <property type="entry name" value="CDATPASE"/>
</dbReference>
<dbReference type="SFLD" id="SFLDS00003">
    <property type="entry name" value="Haloacid_Dehalogenase"/>
    <property type="match status" value="1"/>
</dbReference>
<dbReference type="SFLD" id="SFLDF00027">
    <property type="entry name" value="p-type_atpase"/>
    <property type="match status" value="1"/>
</dbReference>
<dbReference type="SUPFAM" id="SSF81653">
    <property type="entry name" value="Calcium ATPase, transduction domain A"/>
    <property type="match status" value="1"/>
</dbReference>
<dbReference type="SUPFAM" id="SSF81665">
    <property type="entry name" value="Calcium ATPase, transmembrane domain M"/>
    <property type="match status" value="1"/>
</dbReference>
<dbReference type="SUPFAM" id="SSF56784">
    <property type="entry name" value="HAD-like"/>
    <property type="match status" value="1"/>
</dbReference>
<dbReference type="SUPFAM" id="SSF55008">
    <property type="entry name" value="HMA, heavy metal-associated domain"/>
    <property type="match status" value="1"/>
</dbReference>
<dbReference type="PROSITE" id="PS00154">
    <property type="entry name" value="ATPASE_E1_E2"/>
    <property type="match status" value="1"/>
</dbReference>
<dbReference type="PROSITE" id="PS01047">
    <property type="entry name" value="HMA_1"/>
    <property type="match status" value="1"/>
</dbReference>
<dbReference type="PROSITE" id="PS50846">
    <property type="entry name" value="HMA_2"/>
    <property type="match status" value="1"/>
</dbReference>
<accession>Q6GIX1</accession>
<comment type="function">
    <text evidence="2">Couples the hydrolysis of ATP with the export of cadmium.</text>
</comment>
<comment type="catalytic activity">
    <reaction evidence="2">
        <text>Cd(2+)(in) + ATP + H2O = Cd(2+)(out) + ADP + phosphate + H(+)</text>
        <dbReference type="Rhea" id="RHEA:12132"/>
        <dbReference type="ChEBI" id="CHEBI:15377"/>
        <dbReference type="ChEBI" id="CHEBI:15378"/>
        <dbReference type="ChEBI" id="CHEBI:30616"/>
        <dbReference type="ChEBI" id="CHEBI:43474"/>
        <dbReference type="ChEBI" id="CHEBI:48775"/>
        <dbReference type="ChEBI" id="CHEBI:456216"/>
        <dbReference type="EC" id="7.2.2.21"/>
    </reaction>
</comment>
<comment type="subcellular location">
    <subcellularLocation>
        <location evidence="2">Cell membrane</location>
        <topology evidence="3">Multi-pass membrane protein</topology>
    </subcellularLocation>
</comment>
<comment type="similarity">
    <text evidence="5">Belongs to the cation transport ATPase (P-type) (TC 3.A.3) family. Type IB subfamily.</text>
</comment>
<feature type="chain" id="PRO_0000225595" description="Probable cadmium-transporting ATPase">
    <location>
        <begin position="1"/>
        <end position="726"/>
    </location>
</feature>
<feature type="transmembrane region" description="Helical" evidence="3">
    <location>
        <begin position="105"/>
        <end position="125"/>
    </location>
</feature>
<feature type="transmembrane region" description="Helical" evidence="3">
    <location>
        <begin position="129"/>
        <end position="149"/>
    </location>
</feature>
<feature type="transmembrane region" description="Helical" evidence="3">
    <location>
        <begin position="163"/>
        <end position="179"/>
    </location>
</feature>
<feature type="transmembrane region" description="Helical" evidence="3">
    <location>
        <begin position="335"/>
        <end position="355"/>
    </location>
</feature>
<feature type="transmembrane region" description="Helical" evidence="3">
    <location>
        <begin position="363"/>
        <end position="383"/>
    </location>
</feature>
<feature type="transmembrane region" description="Helical" evidence="3">
    <location>
        <begin position="671"/>
        <end position="693"/>
    </location>
</feature>
<feature type="transmembrane region" description="Helical" evidence="3">
    <location>
        <begin position="698"/>
        <end position="720"/>
    </location>
</feature>
<feature type="domain" description="HMA" evidence="4">
    <location>
        <begin position="11"/>
        <end position="74"/>
    </location>
</feature>
<feature type="active site" description="4-aspartylphosphate intermediate" evidence="1">
    <location>
        <position position="414"/>
    </location>
</feature>
<feature type="binding site" evidence="4">
    <location>
        <position position="22"/>
    </location>
    <ligand>
        <name>Cd(2+)</name>
        <dbReference type="ChEBI" id="CHEBI:48775"/>
    </ligand>
</feature>
<feature type="binding site" evidence="4">
    <location>
        <position position="25"/>
    </location>
    <ligand>
        <name>Cd(2+)</name>
        <dbReference type="ChEBI" id="CHEBI:48775"/>
    </ligand>
</feature>
<protein>
    <recommendedName>
        <fullName evidence="5">Probable cadmium-transporting ATPase</fullName>
        <ecNumber evidence="2">7.2.2.21</ecNumber>
    </recommendedName>
    <alternativeName>
        <fullName evidence="2">Cadmium-efflux ATPase</fullName>
    </alternativeName>
</protein>
<evidence type="ECO:0000250" key="1"/>
<evidence type="ECO:0000250" key="2">
    <source>
        <dbReference type="UniProtKB" id="P20021"/>
    </source>
</evidence>
<evidence type="ECO:0000255" key="3"/>
<evidence type="ECO:0000255" key="4">
    <source>
        <dbReference type="PROSITE-ProRule" id="PRU00280"/>
    </source>
</evidence>
<evidence type="ECO:0000305" key="5"/>
<organism>
    <name type="scientific">Staphylococcus aureus (strain MRSA252)</name>
    <dbReference type="NCBI Taxonomy" id="282458"/>
    <lineage>
        <taxon>Bacteria</taxon>
        <taxon>Bacillati</taxon>
        <taxon>Bacillota</taxon>
        <taxon>Bacilli</taxon>
        <taxon>Bacillales</taxon>
        <taxon>Staphylococcaceae</taxon>
        <taxon>Staphylococcus</taxon>
    </lineage>
</organism>